<dbReference type="EMBL" id="CP000886">
    <property type="protein sequence ID" value="ABX70288.1"/>
    <property type="molecule type" value="Genomic_DNA"/>
</dbReference>
<dbReference type="RefSeq" id="WP_000027730.1">
    <property type="nucleotide sequence ID" value="NC_010102.1"/>
</dbReference>
<dbReference type="SMR" id="A9MZB0"/>
<dbReference type="KEGG" id="spq:SPAB_04996"/>
<dbReference type="PATRIC" id="fig|1016998.12.peg.4688"/>
<dbReference type="HOGENOM" id="CLU_055275_0_0_6"/>
<dbReference type="BioCyc" id="SENT1016998:SPAB_RS20325-MONOMER"/>
<dbReference type="Proteomes" id="UP000008556">
    <property type="component" value="Chromosome"/>
</dbReference>
<dbReference type="GO" id="GO:0005829">
    <property type="term" value="C:cytosol"/>
    <property type="evidence" value="ECO:0007669"/>
    <property type="project" value="TreeGrafter"/>
</dbReference>
<dbReference type="GO" id="GO:0008199">
    <property type="term" value="F:ferric iron binding"/>
    <property type="evidence" value="ECO:0007669"/>
    <property type="project" value="TreeGrafter"/>
</dbReference>
<dbReference type="GO" id="GO:0051604">
    <property type="term" value="P:protein maturation"/>
    <property type="evidence" value="ECO:0007669"/>
    <property type="project" value="TreeGrafter"/>
</dbReference>
<dbReference type="CDD" id="cd16341">
    <property type="entry name" value="FdhE"/>
    <property type="match status" value="1"/>
</dbReference>
<dbReference type="FunFam" id="3.90.1670.10:FF:000001">
    <property type="entry name" value="Protein FdhE"/>
    <property type="match status" value="1"/>
</dbReference>
<dbReference type="Gene3D" id="3.90.1670.10">
    <property type="entry name" value="FdhE-like domain"/>
    <property type="match status" value="1"/>
</dbReference>
<dbReference type="HAMAP" id="MF_00611">
    <property type="entry name" value="FdeH"/>
    <property type="match status" value="1"/>
</dbReference>
<dbReference type="InterPro" id="IPR024064">
    <property type="entry name" value="FdhE-like_sf"/>
</dbReference>
<dbReference type="InterPro" id="IPR056796">
    <property type="entry name" value="FdhE_C"/>
</dbReference>
<dbReference type="InterPro" id="IPR056797">
    <property type="entry name" value="FdhE_central"/>
</dbReference>
<dbReference type="InterPro" id="IPR056774">
    <property type="entry name" value="FdhE_N"/>
</dbReference>
<dbReference type="InterPro" id="IPR006452">
    <property type="entry name" value="Formate_DH_accessory"/>
</dbReference>
<dbReference type="NCBIfam" id="TIGR01562">
    <property type="entry name" value="FdhE"/>
    <property type="match status" value="1"/>
</dbReference>
<dbReference type="NCBIfam" id="NF002925">
    <property type="entry name" value="PRK03564.1"/>
    <property type="match status" value="1"/>
</dbReference>
<dbReference type="PANTHER" id="PTHR37689">
    <property type="entry name" value="PROTEIN FDHE"/>
    <property type="match status" value="1"/>
</dbReference>
<dbReference type="PANTHER" id="PTHR37689:SF1">
    <property type="entry name" value="PROTEIN FDHE"/>
    <property type="match status" value="1"/>
</dbReference>
<dbReference type="Pfam" id="PF24860">
    <property type="entry name" value="FdhE_C"/>
    <property type="match status" value="1"/>
</dbReference>
<dbReference type="Pfam" id="PF24859">
    <property type="entry name" value="FdhE_central"/>
    <property type="match status" value="1"/>
</dbReference>
<dbReference type="Pfam" id="PF04216">
    <property type="entry name" value="FdhE_N"/>
    <property type="match status" value="1"/>
</dbReference>
<dbReference type="PIRSF" id="PIRSF018296">
    <property type="entry name" value="Format_dh_formtn"/>
    <property type="match status" value="1"/>
</dbReference>
<dbReference type="SUPFAM" id="SSF144020">
    <property type="entry name" value="FdhE-like"/>
    <property type="match status" value="1"/>
</dbReference>
<keyword id="KW-0963">Cytoplasm</keyword>
<gene>
    <name evidence="1" type="primary">fdhE</name>
    <name type="ordered locus">SPAB_04996</name>
</gene>
<organism>
    <name type="scientific">Salmonella paratyphi B (strain ATCC BAA-1250 / SPB7)</name>
    <dbReference type="NCBI Taxonomy" id="1016998"/>
    <lineage>
        <taxon>Bacteria</taxon>
        <taxon>Pseudomonadati</taxon>
        <taxon>Pseudomonadota</taxon>
        <taxon>Gammaproteobacteria</taxon>
        <taxon>Enterobacterales</taxon>
        <taxon>Enterobacteriaceae</taxon>
        <taxon>Salmonella</taxon>
    </lineage>
</organism>
<sequence length="309" mass="34706">MSIRIIPQDELGSSEKRTADMIPPLLFPRLKNVYNRRAERLRELAENNPLGDYLRFAALIAHAQEVVLYDHPLEMDLTARIKEANDQGKPPLDIHVLPRDKHWQKLLHSLIAELKPEMSGPALAVIENLEKASEQELEQMASALFASDFASVSSDKAPFIWAALSLYWAQMASLIPGKARAEYGEARQYCPVCGSMPVSSMVQIGTTQGLRYLHCNLCETEWHVVRVKCSNCEQSRDLHYWSLENEQAAVKAESCGDCGTYLKILYQEKDPKVEAVADDLASLVLDARMEQEGFARSSINPFLFPGEGE</sequence>
<protein>
    <recommendedName>
        <fullName evidence="1">Protein FdhE</fullName>
    </recommendedName>
</protein>
<accession>A9MZB0</accession>
<evidence type="ECO:0000255" key="1">
    <source>
        <dbReference type="HAMAP-Rule" id="MF_00611"/>
    </source>
</evidence>
<comment type="function">
    <text evidence="1">Necessary for formate dehydrogenase activity.</text>
</comment>
<comment type="subcellular location">
    <subcellularLocation>
        <location evidence="1">Cytoplasm</location>
    </subcellularLocation>
</comment>
<comment type="similarity">
    <text evidence="1">Belongs to the FdhE family.</text>
</comment>
<name>FDHE_SALPB</name>
<feature type="chain" id="PRO_1000082572" description="Protein FdhE">
    <location>
        <begin position="1"/>
        <end position="309"/>
    </location>
</feature>
<reference key="1">
    <citation type="submission" date="2007-11" db="EMBL/GenBank/DDBJ databases">
        <authorList>
            <consortium name="The Salmonella enterica serovar Paratyphi B Genome Sequencing Project"/>
            <person name="McClelland M."/>
            <person name="Sanderson E.K."/>
            <person name="Porwollik S."/>
            <person name="Spieth J."/>
            <person name="Clifton W.S."/>
            <person name="Fulton R."/>
            <person name="Cordes M."/>
            <person name="Wollam A."/>
            <person name="Shah N."/>
            <person name="Pepin K."/>
            <person name="Bhonagiri V."/>
            <person name="Nash W."/>
            <person name="Johnson M."/>
            <person name="Thiruvilangam P."/>
            <person name="Wilson R."/>
        </authorList>
    </citation>
    <scope>NUCLEOTIDE SEQUENCE [LARGE SCALE GENOMIC DNA]</scope>
    <source>
        <strain>ATCC BAA-1250 / SPB7</strain>
    </source>
</reference>
<proteinExistence type="inferred from homology"/>